<proteinExistence type="inferred from homology"/>
<keyword id="KW-0687">Ribonucleoprotein</keyword>
<keyword id="KW-0689">Ribosomal protein</keyword>
<comment type="similarity">
    <text evidence="1">Belongs to the bacterial ribosomal protein bS21 family.</text>
</comment>
<dbReference type="EMBL" id="CP001083">
    <property type="protein sequence ID" value="ACQ53944.1"/>
    <property type="molecule type" value="Genomic_DNA"/>
</dbReference>
<dbReference type="RefSeq" id="WP_003357777.1">
    <property type="nucleotide sequence ID" value="NC_012658.1"/>
</dbReference>
<dbReference type="SMR" id="C3L3G1"/>
<dbReference type="GeneID" id="92939674"/>
<dbReference type="KEGG" id="cbi:CLJ_B3210"/>
<dbReference type="HOGENOM" id="CLU_159258_1_2_9"/>
<dbReference type="Proteomes" id="UP000002333">
    <property type="component" value="Chromosome"/>
</dbReference>
<dbReference type="GO" id="GO:1990904">
    <property type="term" value="C:ribonucleoprotein complex"/>
    <property type="evidence" value="ECO:0007669"/>
    <property type="project" value="UniProtKB-KW"/>
</dbReference>
<dbReference type="GO" id="GO:0005840">
    <property type="term" value="C:ribosome"/>
    <property type="evidence" value="ECO:0007669"/>
    <property type="project" value="UniProtKB-KW"/>
</dbReference>
<dbReference type="GO" id="GO:0003735">
    <property type="term" value="F:structural constituent of ribosome"/>
    <property type="evidence" value="ECO:0007669"/>
    <property type="project" value="InterPro"/>
</dbReference>
<dbReference type="GO" id="GO:0006412">
    <property type="term" value="P:translation"/>
    <property type="evidence" value="ECO:0007669"/>
    <property type="project" value="UniProtKB-UniRule"/>
</dbReference>
<dbReference type="Gene3D" id="1.20.5.1150">
    <property type="entry name" value="Ribosomal protein S8"/>
    <property type="match status" value="1"/>
</dbReference>
<dbReference type="HAMAP" id="MF_00358">
    <property type="entry name" value="Ribosomal_bS21"/>
    <property type="match status" value="1"/>
</dbReference>
<dbReference type="InterPro" id="IPR001911">
    <property type="entry name" value="Ribosomal_bS21"/>
</dbReference>
<dbReference type="InterPro" id="IPR018278">
    <property type="entry name" value="Ribosomal_bS21_CS"/>
</dbReference>
<dbReference type="InterPro" id="IPR038380">
    <property type="entry name" value="Ribosomal_bS21_sf"/>
</dbReference>
<dbReference type="NCBIfam" id="TIGR00030">
    <property type="entry name" value="S21p"/>
    <property type="match status" value="1"/>
</dbReference>
<dbReference type="PANTHER" id="PTHR21109">
    <property type="entry name" value="MITOCHONDRIAL 28S RIBOSOMAL PROTEIN S21"/>
    <property type="match status" value="1"/>
</dbReference>
<dbReference type="PANTHER" id="PTHR21109:SF22">
    <property type="entry name" value="SMALL RIBOSOMAL SUBUNIT PROTEIN BS21"/>
    <property type="match status" value="1"/>
</dbReference>
<dbReference type="Pfam" id="PF01165">
    <property type="entry name" value="Ribosomal_S21"/>
    <property type="match status" value="1"/>
</dbReference>
<dbReference type="PRINTS" id="PR00976">
    <property type="entry name" value="RIBOSOMALS21"/>
</dbReference>
<dbReference type="PROSITE" id="PS01181">
    <property type="entry name" value="RIBOSOMAL_S21"/>
    <property type="match status" value="1"/>
</dbReference>
<protein>
    <recommendedName>
        <fullName evidence="1">Small ribosomal subunit protein bS21</fullName>
    </recommendedName>
    <alternativeName>
        <fullName evidence="3">30S ribosomal protein S21</fullName>
    </alternativeName>
</protein>
<evidence type="ECO:0000255" key="1">
    <source>
        <dbReference type="HAMAP-Rule" id="MF_00358"/>
    </source>
</evidence>
<evidence type="ECO:0000256" key="2">
    <source>
        <dbReference type="SAM" id="MobiDB-lite"/>
    </source>
</evidence>
<evidence type="ECO:0000305" key="3"/>
<sequence>MSEIKVGENESLENALRRFKKKCARAGVLSEVRKREHYEKPSVKKKKKSEAARKRKFK</sequence>
<organism>
    <name type="scientific">Clostridium botulinum (strain 657 / Type Ba4)</name>
    <dbReference type="NCBI Taxonomy" id="515621"/>
    <lineage>
        <taxon>Bacteria</taxon>
        <taxon>Bacillati</taxon>
        <taxon>Bacillota</taxon>
        <taxon>Clostridia</taxon>
        <taxon>Eubacteriales</taxon>
        <taxon>Clostridiaceae</taxon>
        <taxon>Clostridium</taxon>
    </lineage>
</organism>
<reference key="1">
    <citation type="submission" date="2008-05" db="EMBL/GenBank/DDBJ databases">
        <title>Genome sequence of Clostridium botulinum Ba4 strain 657.</title>
        <authorList>
            <person name="Shrivastava S."/>
            <person name="Brown J.L."/>
            <person name="Bruce D."/>
            <person name="Detter C."/>
            <person name="Munk C."/>
            <person name="Smith L.A."/>
            <person name="Smith T.J."/>
            <person name="Sutton G."/>
            <person name="Brettin T.S."/>
        </authorList>
    </citation>
    <scope>NUCLEOTIDE SEQUENCE [LARGE SCALE GENOMIC DNA]</scope>
    <source>
        <strain>657 / Type Ba4</strain>
    </source>
</reference>
<accession>C3L3G1</accession>
<feature type="chain" id="PRO_1000205362" description="Small ribosomal subunit protein bS21">
    <location>
        <begin position="1"/>
        <end position="58"/>
    </location>
</feature>
<feature type="region of interest" description="Disordered" evidence="2">
    <location>
        <begin position="32"/>
        <end position="58"/>
    </location>
</feature>
<feature type="compositionally biased region" description="Basic and acidic residues" evidence="2">
    <location>
        <begin position="32"/>
        <end position="42"/>
    </location>
</feature>
<feature type="compositionally biased region" description="Basic residues" evidence="2">
    <location>
        <begin position="43"/>
        <end position="58"/>
    </location>
</feature>
<gene>
    <name evidence="1" type="primary">rpsU</name>
    <name type="ordered locus">CLJ_B3210</name>
</gene>
<name>RS21_CLOB6</name>